<accession>B7N444</accession>
<dbReference type="EMBL" id="CU928163">
    <property type="protein sequence ID" value="CAR12737.1"/>
    <property type="molecule type" value="Genomic_DNA"/>
</dbReference>
<dbReference type="RefSeq" id="WP_001310025.1">
    <property type="nucleotide sequence ID" value="NC_011751.1"/>
</dbReference>
<dbReference type="RefSeq" id="YP_002412273.1">
    <property type="nucleotide sequence ID" value="NC_011751.1"/>
</dbReference>
<dbReference type="SMR" id="B7N444"/>
<dbReference type="STRING" id="585056.ECUMN_1530"/>
<dbReference type="KEGG" id="eum:ECUMN_1530"/>
<dbReference type="PATRIC" id="fig|585056.7.peg.1727"/>
<dbReference type="HOGENOM" id="CLU_099590_0_0_6"/>
<dbReference type="Proteomes" id="UP000007097">
    <property type="component" value="Chromosome"/>
</dbReference>
<dbReference type="Gene3D" id="3.10.450.50">
    <property type="match status" value="1"/>
</dbReference>
<dbReference type="HAMAP" id="MF_00612">
    <property type="entry name" value="UPF0225"/>
    <property type="match status" value="1"/>
</dbReference>
<dbReference type="InterPro" id="IPR032710">
    <property type="entry name" value="NTF2-like_dom_sf"/>
</dbReference>
<dbReference type="InterPro" id="IPR004027">
    <property type="entry name" value="SEC_C_motif"/>
</dbReference>
<dbReference type="InterPro" id="IPR023006">
    <property type="entry name" value="UPF0225"/>
</dbReference>
<dbReference type="InterPro" id="IPR048469">
    <property type="entry name" value="YchJ-like_M"/>
</dbReference>
<dbReference type="NCBIfam" id="NF002449">
    <property type="entry name" value="PRK01617.1"/>
    <property type="match status" value="1"/>
</dbReference>
<dbReference type="NCBIfam" id="NF002486">
    <property type="entry name" value="PRK01752.1"/>
    <property type="match status" value="1"/>
</dbReference>
<dbReference type="PANTHER" id="PTHR33747:SF1">
    <property type="entry name" value="ADENYLATE CYCLASE-ASSOCIATED CAP C-TERMINAL DOMAIN-CONTAINING PROTEIN"/>
    <property type="match status" value="1"/>
</dbReference>
<dbReference type="PANTHER" id="PTHR33747">
    <property type="entry name" value="UPF0225 PROTEIN SCO1677"/>
    <property type="match status" value="1"/>
</dbReference>
<dbReference type="Pfam" id="PF02810">
    <property type="entry name" value="SEC-C"/>
    <property type="match status" value="2"/>
</dbReference>
<dbReference type="Pfam" id="PF17775">
    <property type="entry name" value="YchJ_M-like"/>
    <property type="match status" value="1"/>
</dbReference>
<dbReference type="SUPFAM" id="SSF54427">
    <property type="entry name" value="NTF2-like"/>
    <property type="match status" value="1"/>
</dbReference>
<dbReference type="SUPFAM" id="SSF103642">
    <property type="entry name" value="Sec-C motif"/>
    <property type="match status" value="1"/>
</dbReference>
<evidence type="ECO:0000255" key="1">
    <source>
        <dbReference type="HAMAP-Rule" id="MF_00612"/>
    </source>
</evidence>
<feature type="chain" id="PRO_1000130383" description="UPF0225 protein YchJ">
    <location>
        <begin position="1"/>
        <end position="152"/>
    </location>
</feature>
<organism>
    <name type="scientific">Escherichia coli O17:K52:H18 (strain UMN026 / ExPEC)</name>
    <dbReference type="NCBI Taxonomy" id="585056"/>
    <lineage>
        <taxon>Bacteria</taxon>
        <taxon>Pseudomonadati</taxon>
        <taxon>Pseudomonadota</taxon>
        <taxon>Gammaproteobacteria</taxon>
        <taxon>Enterobacterales</taxon>
        <taxon>Enterobacteriaceae</taxon>
        <taxon>Escherichia</taxon>
    </lineage>
</organism>
<protein>
    <recommendedName>
        <fullName evidence="1">UPF0225 protein YchJ</fullName>
    </recommendedName>
</protein>
<name>YCHJ_ECOLU</name>
<comment type="similarity">
    <text evidence="1">Belongs to the UPF0225 family.</text>
</comment>
<reference key="1">
    <citation type="journal article" date="2009" name="PLoS Genet.">
        <title>Organised genome dynamics in the Escherichia coli species results in highly diverse adaptive paths.</title>
        <authorList>
            <person name="Touchon M."/>
            <person name="Hoede C."/>
            <person name="Tenaillon O."/>
            <person name="Barbe V."/>
            <person name="Baeriswyl S."/>
            <person name="Bidet P."/>
            <person name="Bingen E."/>
            <person name="Bonacorsi S."/>
            <person name="Bouchier C."/>
            <person name="Bouvet O."/>
            <person name="Calteau A."/>
            <person name="Chiapello H."/>
            <person name="Clermont O."/>
            <person name="Cruveiller S."/>
            <person name="Danchin A."/>
            <person name="Diard M."/>
            <person name="Dossat C."/>
            <person name="Karoui M.E."/>
            <person name="Frapy E."/>
            <person name="Garry L."/>
            <person name="Ghigo J.M."/>
            <person name="Gilles A.M."/>
            <person name="Johnson J."/>
            <person name="Le Bouguenec C."/>
            <person name="Lescat M."/>
            <person name="Mangenot S."/>
            <person name="Martinez-Jehanne V."/>
            <person name="Matic I."/>
            <person name="Nassif X."/>
            <person name="Oztas S."/>
            <person name="Petit M.A."/>
            <person name="Pichon C."/>
            <person name="Rouy Z."/>
            <person name="Ruf C.S."/>
            <person name="Schneider D."/>
            <person name="Tourret J."/>
            <person name="Vacherie B."/>
            <person name="Vallenet D."/>
            <person name="Medigue C."/>
            <person name="Rocha E.P.C."/>
            <person name="Denamur E."/>
        </authorList>
    </citation>
    <scope>NUCLEOTIDE SEQUENCE [LARGE SCALE GENOMIC DNA]</scope>
    <source>
        <strain>UMN026 / ExPEC</strain>
    </source>
</reference>
<proteinExistence type="inferred from homology"/>
<sequence length="152" mass="17000">MSQLCPCGSAVEYSLCCHPYVSGEKVAPDPEHLMRSRYCAFVMKDADYLIKTWHPSCGAAALRAELIAGFAHTEWLGLTVFEHCWQDVDNIGFVSFVARFTEGGKTGAIIERSRFLKENGQWYYIDGTRPQFGRNDPCPCGSGKKFKKCCGQ</sequence>
<gene>
    <name evidence="1" type="primary">ychJ</name>
    <name type="ordered locus">ECUMN_1530</name>
</gene>